<comment type="function">
    <text evidence="1">This protein is located at the 30S-50S ribosomal subunit interface and may play a role in the structure and function of the aminoacyl-tRNA binding site.</text>
</comment>
<comment type="similarity">
    <text evidence="1">Belongs to the bacterial ribosomal protein bL19 family.</text>
</comment>
<feature type="chain" id="PRO_1000049766" description="Large ribosomal subunit protein bL19">
    <location>
        <begin position="1"/>
        <end position="115"/>
    </location>
</feature>
<dbReference type="EMBL" id="CP000668">
    <property type="protein sequence ID" value="ABP41427.1"/>
    <property type="molecule type" value="Genomic_DNA"/>
</dbReference>
<dbReference type="RefSeq" id="WP_002209461.1">
    <property type="nucleotide sequence ID" value="NZ_CP009715.1"/>
</dbReference>
<dbReference type="SMR" id="A4TQ65"/>
<dbReference type="GeneID" id="96664344"/>
<dbReference type="KEGG" id="ypp:YPDSF_3069"/>
<dbReference type="PATRIC" id="fig|386656.14.peg.1291"/>
<dbReference type="GO" id="GO:0022625">
    <property type="term" value="C:cytosolic large ribosomal subunit"/>
    <property type="evidence" value="ECO:0007669"/>
    <property type="project" value="TreeGrafter"/>
</dbReference>
<dbReference type="GO" id="GO:0003735">
    <property type="term" value="F:structural constituent of ribosome"/>
    <property type="evidence" value="ECO:0007669"/>
    <property type="project" value="InterPro"/>
</dbReference>
<dbReference type="GO" id="GO:0006412">
    <property type="term" value="P:translation"/>
    <property type="evidence" value="ECO:0007669"/>
    <property type="project" value="UniProtKB-UniRule"/>
</dbReference>
<dbReference type="FunFam" id="2.30.30.790:FF:000001">
    <property type="entry name" value="50S ribosomal protein L19"/>
    <property type="match status" value="1"/>
</dbReference>
<dbReference type="Gene3D" id="2.30.30.790">
    <property type="match status" value="1"/>
</dbReference>
<dbReference type="HAMAP" id="MF_00402">
    <property type="entry name" value="Ribosomal_bL19"/>
    <property type="match status" value="1"/>
</dbReference>
<dbReference type="InterPro" id="IPR001857">
    <property type="entry name" value="Ribosomal_bL19"/>
</dbReference>
<dbReference type="InterPro" id="IPR018257">
    <property type="entry name" value="Ribosomal_bL19_CS"/>
</dbReference>
<dbReference type="InterPro" id="IPR038657">
    <property type="entry name" value="Ribosomal_bL19_sf"/>
</dbReference>
<dbReference type="InterPro" id="IPR008991">
    <property type="entry name" value="Translation_prot_SH3-like_sf"/>
</dbReference>
<dbReference type="NCBIfam" id="TIGR01024">
    <property type="entry name" value="rplS_bact"/>
    <property type="match status" value="1"/>
</dbReference>
<dbReference type="PANTHER" id="PTHR15680:SF9">
    <property type="entry name" value="LARGE RIBOSOMAL SUBUNIT PROTEIN BL19M"/>
    <property type="match status" value="1"/>
</dbReference>
<dbReference type="PANTHER" id="PTHR15680">
    <property type="entry name" value="RIBOSOMAL PROTEIN L19"/>
    <property type="match status" value="1"/>
</dbReference>
<dbReference type="Pfam" id="PF01245">
    <property type="entry name" value="Ribosomal_L19"/>
    <property type="match status" value="1"/>
</dbReference>
<dbReference type="PIRSF" id="PIRSF002191">
    <property type="entry name" value="Ribosomal_L19"/>
    <property type="match status" value="1"/>
</dbReference>
<dbReference type="PRINTS" id="PR00061">
    <property type="entry name" value="RIBOSOMALL19"/>
</dbReference>
<dbReference type="SUPFAM" id="SSF50104">
    <property type="entry name" value="Translation proteins SH3-like domain"/>
    <property type="match status" value="1"/>
</dbReference>
<dbReference type="PROSITE" id="PS01015">
    <property type="entry name" value="RIBOSOMAL_L19"/>
    <property type="match status" value="1"/>
</dbReference>
<reference key="1">
    <citation type="submission" date="2007-02" db="EMBL/GenBank/DDBJ databases">
        <title>Complete sequence of chromosome of Yersinia pestis Pestoides F.</title>
        <authorList>
            <consortium name="US DOE Joint Genome Institute"/>
            <person name="Copeland A."/>
            <person name="Lucas S."/>
            <person name="Lapidus A."/>
            <person name="Barry K."/>
            <person name="Detter J.C."/>
            <person name="Glavina del Rio T."/>
            <person name="Hammon N."/>
            <person name="Israni S."/>
            <person name="Dalin E."/>
            <person name="Tice H."/>
            <person name="Pitluck S."/>
            <person name="Di Bartolo G."/>
            <person name="Chain P."/>
            <person name="Malfatti S."/>
            <person name="Shin M."/>
            <person name="Vergez L."/>
            <person name="Schmutz J."/>
            <person name="Larimer F."/>
            <person name="Land M."/>
            <person name="Hauser L."/>
            <person name="Worsham P."/>
            <person name="Chu M."/>
            <person name="Bearden S."/>
            <person name="Garcia E."/>
            <person name="Richardson P."/>
        </authorList>
    </citation>
    <scope>NUCLEOTIDE SEQUENCE [LARGE SCALE GENOMIC DNA]</scope>
    <source>
        <strain>Pestoides F</strain>
    </source>
</reference>
<sequence>MSNIIKQIEQEQMKQDVPAFRPGDSVEVKVWVVEGSKKRLQAFEGVVIAIRNRGLHSAFTVRKISNGEGVERVFQTHSPVIDSITVKRRGAVRQAKLYYLRERTGKSARIKERLG</sequence>
<proteinExistence type="inferred from homology"/>
<keyword id="KW-0687">Ribonucleoprotein</keyword>
<keyword id="KW-0689">Ribosomal protein</keyword>
<accession>A4TQ65</accession>
<evidence type="ECO:0000255" key="1">
    <source>
        <dbReference type="HAMAP-Rule" id="MF_00402"/>
    </source>
</evidence>
<evidence type="ECO:0000305" key="2"/>
<name>RL19_YERPP</name>
<protein>
    <recommendedName>
        <fullName evidence="1">Large ribosomal subunit protein bL19</fullName>
    </recommendedName>
    <alternativeName>
        <fullName evidence="2">50S ribosomal protein L19</fullName>
    </alternativeName>
</protein>
<gene>
    <name evidence="1" type="primary">rplS</name>
    <name type="ordered locus">YPDSF_3069</name>
</gene>
<organism>
    <name type="scientific">Yersinia pestis (strain Pestoides F)</name>
    <dbReference type="NCBI Taxonomy" id="386656"/>
    <lineage>
        <taxon>Bacteria</taxon>
        <taxon>Pseudomonadati</taxon>
        <taxon>Pseudomonadota</taxon>
        <taxon>Gammaproteobacteria</taxon>
        <taxon>Enterobacterales</taxon>
        <taxon>Yersiniaceae</taxon>
        <taxon>Yersinia</taxon>
    </lineage>
</organism>